<proteinExistence type="evidence at protein level"/>
<accession>Q12200</accession>
<accession>D6W406</accession>
<organism>
    <name type="scientific">Saccharomyces cerevisiae (strain ATCC 204508 / S288c)</name>
    <name type="common">Baker's yeast</name>
    <dbReference type="NCBI Taxonomy" id="559292"/>
    <lineage>
        <taxon>Eukaryota</taxon>
        <taxon>Fungi</taxon>
        <taxon>Dikarya</taxon>
        <taxon>Ascomycota</taxon>
        <taxon>Saccharomycotina</taxon>
        <taxon>Saccharomycetes</taxon>
        <taxon>Saccharomycetales</taxon>
        <taxon>Saccharomycetaceae</taxon>
        <taxon>Saccharomyces</taxon>
    </lineage>
</organism>
<name>NPC1_YEAST</name>
<protein>
    <recommendedName>
        <fullName evidence="9">NPC intracellular sterol transporter 1-related protein 1</fullName>
    </recommendedName>
    <alternativeName>
        <fullName evidence="10">Niemann-Pick type C-related protein 1</fullName>
    </alternativeName>
</protein>
<comment type="function">
    <text evidence="6 8">Involved in sphingolipid trafficking. May recycle sphingolipids between cellular membranous compartments.</text>
</comment>
<comment type="interaction">
    <interactant intactId="EBI-32032">
        <id>Q12200</id>
    </interactant>
    <interactant intactId="EBI-13038">
        <id>P33302</id>
        <label>PDR5</label>
    </interactant>
    <organismsDiffer>false</organismsDiffer>
    <experiments>2</experiments>
</comment>
<comment type="subcellular location">
    <subcellularLocation>
        <location evidence="4 6 7">Vacuole membrane</location>
        <topology evidence="4 6 7">Multi-pass membrane protein</topology>
    </subcellularLocation>
</comment>
<comment type="miscellaneous">
    <text evidence="5">Present with 521 molecules/cell in log phase SD medium.</text>
</comment>
<comment type="similarity">
    <text evidence="9">Belongs to the patched family.</text>
</comment>
<gene>
    <name evidence="10" type="primary">NCR1</name>
    <name type="ordered locus">YPL006W</name>
</gene>
<reference key="1">
    <citation type="journal article" date="1997" name="Nature">
        <title>The nucleotide sequence of Saccharomyces cerevisiae chromosome XVI.</title>
        <authorList>
            <person name="Bussey H."/>
            <person name="Storms R.K."/>
            <person name="Ahmed A."/>
            <person name="Albermann K."/>
            <person name="Allen E."/>
            <person name="Ansorge W."/>
            <person name="Araujo R."/>
            <person name="Aparicio A."/>
            <person name="Barrell B.G."/>
            <person name="Badcock K."/>
            <person name="Benes V."/>
            <person name="Botstein D."/>
            <person name="Bowman S."/>
            <person name="Brueckner M."/>
            <person name="Carpenter J."/>
            <person name="Cherry J.M."/>
            <person name="Chung E."/>
            <person name="Churcher C.M."/>
            <person name="Coster F."/>
            <person name="Davis K."/>
            <person name="Davis R.W."/>
            <person name="Dietrich F.S."/>
            <person name="Delius H."/>
            <person name="DiPaolo T."/>
            <person name="Dubois E."/>
            <person name="Duesterhoeft A."/>
            <person name="Duncan M."/>
            <person name="Floeth M."/>
            <person name="Fortin N."/>
            <person name="Friesen J.D."/>
            <person name="Fritz C."/>
            <person name="Goffeau A."/>
            <person name="Hall J."/>
            <person name="Hebling U."/>
            <person name="Heumann K."/>
            <person name="Hilbert H."/>
            <person name="Hillier L.W."/>
            <person name="Hunicke-Smith S."/>
            <person name="Hyman R.W."/>
            <person name="Johnston M."/>
            <person name="Kalman S."/>
            <person name="Kleine K."/>
            <person name="Komp C."/>
            <person name="Kurdi O."/>
            <person name="Lashkari D."/>
            <person name="Lew H."/>
            <person name="Lin A."/>
            <person name="Lin D."/>
            <person name="Louis E.J."/>
            <person name="Marathe R."/>
            <person name="Messenguy F."/>
            <person name="Mewes H.-W."/>
            <person name="Mirtipati S."/>
            <person name="Moestl D."/>
            <person name="Mueller-Auer S."/>
            <person name="Namath A."/>
            <person name="Nentwich U."/>
            <person name="Oefner P."/>
            <person name="Pearson D."/>
            <person name="Petel F.X."/>
            <person name="Pohl T.M."/>
            <person name="Purnelle B."/>
            <person name="Rajandream M.A."/>
            <person name="Rechmann S."/>
            <person name="Rieger M."/>
            <person name="Riles L."/>
            <person name="Roberts D."/>
            <person name="Schaefer M."/>
            <person name="Scharfe M."/>
            <person name="Scherens B."/>
            <person name="Schramm S."/>
            <person name="Schroeder M."/>
            <person name="Sdicu A.-M."/>
            <person name="Tettelin H."/>
            <person name="Urrestarazu L.A."/>
            <person name="Ushinsky S."/>
            <person name="Vierendeels F."/>
            <person name="Vissers S."/>
            <person name="Voss H."/>
            <person name="Walsh S.V."/>
            <person name="Wambutt R."/>
            <person name="Wang Y."/>
            <person name="Wedler E."/>
            <person name="Wedler H."/>
            <person name="Winnett E."/>
            <person name="Zhong W.-W."/>
            <person name="Zollner A."/>
            <person name="Vo D.H."/>
            <person name="Hani J."/>
        </authorList>
    </citation>
    <scope>NUCLEOTIDE SEQUENCE [LARGE SCALE GENOMIC DNA]</scope>
    <source>
        <strain>ATCC 204508 / S288c</strain>
    </source>
</reference>
<reference key="2">
    <citation type="journal article" date="2014" name="G3 (Bethesda)">
        <title>The reference genome sequence of Saccharomyces cerevisiae: Then and now.</title>
        <authorList>
            <person name="Engel S.R."/>
            <person name="Dietrich F.S."/>
            <person name="Fisk D.G."/>
            <person name="Binkley G."/>
            <person name="Balakrishnan R."/>
            <person name="Costanzo M.C."/>
            <person name="Dwight S.S."/>
            <person name="Hitz B.C."/>
            <person name="Karra K."/>
            <person name="Nash R.S."/>
            <person name="Weng S."/>
            <person name="Wong E.D."/>
            <person name="Lloyd P."/>
            <person name="Skrzypek M.S."/>
            <person name="Miyasato S.R."/>
            <person name="Simison M."/>
            <person name="Cherry J.M."/>
        </authorList>
    </citation>
    <scope>GENOME REANNOTATION</scope>
    <source>
        <strain>ATCC 204508 / S288c</strain>
    </source>
</reference>
<reference key="3">
    <citation type="journal article" date="2003" name="Nature">
        <title>Global analysis of protein localization in budding yeast.</title>
        <authorList>
            <person name="Huh W.-K."/>
            <person name="Falvo J.V."/>
            <person name="Gerke L.C."/>
            <person name="Carroll A.S."/>
            <person name="Howson R.W."/>
            <person name="Weissman J.S."/>
            <person name="O'Shea E.K."/>
        </authorList>
    </citation>
    <scope>SUBCELLULAR LOCATION [LARGE SCALE ANALYSIS]</scope>
</reference>
<reference key="4">
    <citation type="journal article" date="2003" name="Nature">
        <title>Global analysis of protein expression in yeast.</title>
        <authorList>
            <person name="Ghaemmaghami S."/>
            <person name="Huh W.-K."/>
            <person name="Bower K."/>
            <person name="Howson R.W."/>
            <person name="Belle A."/>
            <person name="Dephoure N."/>
            <person name="O'Shea E.K."/>
            <person name="Weissman J.S."/>
        </authorList>
    </citation>
    <scope>LEVEL OF PROTEIN EXPRESSION [LARGE SCALE ANALYSIS]</scope>
</reference>
<reference key="5">
    <citation type="journal article" date="2004" name="J. Cell Biol.">
        <title>Mutagenesis of the putative sterol-sensing domain of yeast Niemann Pick C-related protein reveals a primordial role in subcellular sphingolipid distribution.</title>
        <authorList>
            <person name="Malathi K."/>
            <person name="Higaki K."/>
            <person name="Tinkelenberg A.H."/>
            <person name="Balderes D.A."/>
            <person name="Almanzar-Paramio D."/>
            <person name="Wilcox L.J."/>
            <person name="Erdeniz N."/>
            <person name="Redican F."/>
            <person name="Padamsee M."/>
            <person name="Liu Y."/>
            <person name="Khan S."/>
            <person name="Alcantara F."/>
            <person name="Carstea E.D."/>
            <person name="Morris J.A."/>
            <person name="Sturley S.L."/>
        </authorList>
    </citation>
    <scope>FUNCTION</scope>
    <scope>SUBCELLULAR LOCATION</scope>
    <scope>MUTAGENESIS OF TYR-718</scope>
</reference>
<reference key="6">
    <citation type="journal article" date="2004" name="Traffic">
        <title>Ncr1p, the yeast ortholog of mammalian Niemann Pick C1 protein, is dispensable for endocytic transport.</title>
        <authorList>
            <person name="Zhang S."/>
            <person name="Ren J."/>
            <person name="Li H."/>
            <person name="Zhang Q."/>
            <person name="Armstrong J.S."/>
            <person name="Munn A.L."/>
            <person name="Yang H."/>
        </authorList>
    </citation>
    <scope>SUBCELLULAR LOCATION</scope>
</reference>
<reference key="7">
    <citation type="journal article" date="2005" name="Traffic">
        <title>A yeast model system for functional analysis of the Niemann-Pick type C protein 1 homolog, Ncr1p.</title>
        <authorList>
            <person name="Berger A.C."/>
            <person name="Hanson P.K."/>
            <person name="Wylie Nichols J."/>
            <person name="Corbett A.H."/>
        </authorList>
    </citation>
    <scope>FUNCTION</scope>
</reference>
<dbReference type="EMBL" id="U33335">
    <property type="protein sequence ID" value="AAB68099.1"/>
    <property type="molecule type" value="Genomic_DNA"/>
</dbReference>
<dbReference type="EMBL" id="Z48483">
    <property type="protein sequence ID" value="CAA88380.1"/>
    <property type="molecule type" value="Genomic_DNA"/>
</dbReference>
<dbReference type="EMBL" id="Z71255">
    <property type="protein sequence ID" value="CAA95035.1"/>
    <property type="molecule type" value="Genomic_DNA"/>
</dbReference>
<dbReference type="EMBL" id="BK006949">
    <property type="protein sequence ID" value="DAA11422.1"/>
    <property type="molecule type" value="Genomic_DNA"/>
</dbReference>
<dbReference type="PIR" id="S52525">
    <property type="entry name" value="S52525"/>
</dbReference>
<dbReference type="RefSeq" id="NP_015319.1">
    <property type="nucleotide sequence ID" value="NM_001183820.1"/>
</dbReference>
<dbReference type="PDB" id="6R4L">
    <property type="method" value="X-ray"/>
    <property type="resolution" value="3.50 A"/>
    <property type="chains" value="A=1-1170"/>
</dbReference>
<dbReference type="PDB" id="8QEB">
    <property type="method" value="EM"/>
    <property type="resolution" value="3.30 A"/>
    <property type="chains" value="A=1-1170"/>
</dbReference>
<dbReference type="PDB" id="8QEC">
    <property type="method" value="EM"/>
    <property type="resolution" value="3.30 A"/>
    <property type="chains" value="A=1-1170"/>
</dbReference>
<dbReference type="PDB" id="8QED">
    <property type="method" value="EM"/>
    <property type="resolution" value="3.27 A"/>
    <property type="chains" value="A=1-1170"/>
</dbReference>
<dbReference type="PDB" id="8QEE">
    <property type="method" value="EM"/>
    <property type="resolution" value="2.43 A"/>
    <property type="chains" value="A=1-1170"/>
</dbReference>
<dbReference type="PDB" id="9F40">
    <property type="method" value="X-ray"/>
    <property type="resolution" value="2.44 A"/>
    <property type="chains" value="A/B/C/D=1-245"/>
</dbReference>
<dbReference type="PDB" id="9F41">
    <property type="method" value="X-ray"/>
    <property type="resolution" value="2.64 A"/>
    <property type="chains" value="A/B/C/D=1-245"/>
</dbReference>
<dbReference type="PDBsum" id="6R4L"/>
<dbReference type="PDBsum" id="8QEB"/>
<dbReference type="PDBsum" id="8QEC"/>
<dbReference type="PDBsum" id="8QED"/>
<dbReference type="PDBsum" id="8QEE"/>
<dbReference type="PDBsum" id="9F40"/>
<dbReference type="PDBsum" id="9F41"/>
<dbReference type="EMDB" id="EMD-18350"/>
<dbReference type="EMDB" id="EMD-18351"/>
<dbReference type="EMDB" id="EMD-18352"/>
<dbReference type="EMDB" id="EMD-18353"/>
<dbReference type="SMR" id="Q12200"/>
<dbReference type="BioGRID" id="36171">
    <property type="interactions" value="235"/>
</dbReference>
<dbReference type="FunCoup" id="Q12200">
    <property type="interactions" value="660"/>
</dbReference>
<dbReference type="IntAct" id="Q12200">
    <property type="interactions" value="21"/>
</dbReference>
<dbReference type="MINT" id="Q12200"/>
<dbReference type="STRING" id="4932.YPL006W"/>
<dbReference type="TCDB" id="2.A.6.6.3">
    <property type="family name" value="the resistance-nodulation-cell division (rnd) superfamily"/>
</dbReference>
<dbReference type="GlyCosmos" id="Q12200">
    <property type="glycosylation" value="8 sites, No reported glycans"/>
</dbReference>
<dbReference type="GlyGen" id="Q12200">
    <property type="glycosylation" value="8 sites"/>
</dbReference>
<dbReference type="iPTMnet" id="Q12200"/>
<dbReference type="PaxDb" id="4932-YPL006W"/>
<dbReference type="PeptideAtlas" id="Q12200"/>
<dbReference type="EnsemblFungi" id="YPL006W_mRNA">
    <property type="protein sequence ID" value="YPL006W"/>
    <property type="gene ID" value="YPL006W"/>
</dbReference>
<dbReference type="GeneID" id="856101"/>
<dbReference type="KEGG" id="sce:YPL006W"/>
<dbReference type="AGR" id="SGD:S000005927"/>
<dbReference type="SGD" id="S000005927">
    <property type="gene designation" value="NCR1"/>
</dbReference>
<dbReference type="VEuPathDB" id="FungiDB:YPL006W"/>
<dbReference type="eggNOG" id="KOG1933">
    <property type="taxonomic scope" value="Eukaryota"/>
</dbReference>
<dbReference type="GeneTree" id="ENSGT00940000156182"/>
<dbReference type="HOGENOM" id="CLU_002359_0_1_1"/>
<dbReference type="InParanoid" id="Q12200"/>
<dbReference type="OMA" id="WWFDVES"/>
<dbReference type="OrthoDB" id="6510177at2759"/>
<dbReference type="BioCyc" id="YEAST:G3O-33925-MONOMER"/>
<dbReference type="Reactome" id="R-SCE-8963678">
    <property type="pathway name" value="Intestinal lipid absorption"/>
</dbReference>
<dbReference type="Reactome" id="R-SCE-8964038">
    <property type="pathway name" value="LDL clearance"/>
</dbReference>
<dbReference type="BioGRID-ORCS" id="856101">
    <property type="hits" value="0 hits in 10 CRISPR screens"/>
</dbReference>
<dbReference type="PRO" id="PR:Q12200"/>
<dbReference type="Proteomes" id="UP000002311">
    <property type="component" value="Chromosome XVI"/>
</dbReference>
<dbReference type="RNAct" id="Q12200">
    <property type="molecule type" value="protein"/>
</dbReference>
<dbReference type="GO" id="GO:0005783">
    <property type="term" value="C:endoplasmic reticulum"/>
    <property type="evidence" value="ECO:0007005"/>
    <property type="project" value="SGD"/>
</dbReference>
<dbReference type="GO" id="GO:0000329">
    <property type="term" value="C:fungal-type vacuole membrane"/>
    <property type="evidence" value="ECO:0000314"/>
    <property type="project" value="SGD"/>
</dbReference>
<dbReference type="GO" id="GO:0016020">
    <property type="term" value="C:membrane"/>
    <property type="evidence" value="ECO:0000318"/>
    <property type="project" value="GO_Central"/>
</dbReference>
<dbReference type="GO" id="GO:0032934">
    <property type="term" value="F:sterol binding"/>
    <property type="evidence" value="ECO:0000314"/>
    <property type="project" value="SGD"/>
</dbReference>
<dbReference type="GO" id="GO:0022857">
    <property type="term" value="F:transmembrane transporter activity"/>
    <property type="evidence" value="ECO:0007669"/>
    <property type="project" value="InterPro"/>
</dbReference>
<dbReference type="GO" id="GO:0006665">
    <property type="term" value="P:sphingolipid metabolic process"/>
    <property type="evidence" value="ECO:0000315"/>
    <property type="project" value="SGD"/>
</dbReference>
<dbReference type="GO" id="GO:0015918">
    <property type="term" value="P:sterol transport"/>
    <property type="evidence" value="ECO:0000314"/>
    <property type="project" value="SGD"/>
</dbReference>
<dbReference type="FunFam" id="1.20.1640.10:FF:000008">
    <property type="entry name" value="NPC intracellular cholesterol transporter 1"/>
    <property type="match status" value="1"/>
</dbReference>
<dbReference type="FunFam" id="1.20.1640.10:FF:000029">
    <property type="entry name" value="Putative Patched sphingolipid transporter"/>
    <property type="match status" value="1"/>
</dbReference>
<dbReference type="Gene3D" id="1.20.1640.10">
    <property type="entry name" value="Multidrug efflux transporter AcrB transmembrane domain"/>
    <property type="match status" value="2"/>
</dbReference>
<dbReference type="InterPro" id="IPR001036">
    <property type="entry name" value="Acrflvin-R"/>
</dbReference>
<dbReference type="InterPro" id="IPR053958">
    <property type="entry name" value="HMGCR/SNAP/NPC1-like_SSD"/>
</dbReference>
<dbReference type="InterPro" id="IPR053956">
    <property type="entry name" value="NPC1_MLD"/>
</dbReference>
<dbReference type="InterPro" id="IPR032190">
    <property type="entry name" value="NPC1_N"/>
</dbReference>
<dbReference type="InterPro" id="IPR000731">
    <property type="entry name" value="SSD"/>
</dbReference>
<dbReference type="PANTHER" id="PTHR45727">
    <property type="entry name" value="NPC INTRACELLULAR CHOLESTEROL TRANSPORTER 1"/>
    <property type="match status" value="1"/>
</dbReference>
<dbReference type="PANTHER" id="PTHR45727:SF2">
    <property type="entry name" value="NPC INTRACELLULAR CHOLESTEROL TRANSPORTER 1"/>
    <property type="match status" value="1"/>
</dbReference>
<dbReference type="Pfam" id="PF00873">
    <property type="entry name" value="ACR_tran"/>
    <property type="match status" value="1"/>
</dbReference>
<dbReference type="Pfam" id="PF22314">
    <property type="entry name" value="NPC1_MLD"/>
    <property type="match status" value="1"/>
</dbReference>
<dbReference type="Pfam" id="PF16414">
    <property type="entry name" value="NPC1_N"/>
    <property type="match status" value="1"/>
</dbReference>
<dbReference type="Pfam" id="PF12349">
    <property type="entry name" value="Sterol-sensing"/>
    <property type="match status" value="1"/>
</dbReference>
<dbReference type="SUPFAM" id="SSF82866">
    <property type="entry name" value="Multidrug efflux transporter AcrB transmembrane domain"/>
    <property type="match status" value="2"/>
</dbReference>
<dbReference type="PROSITE" id="PS50156">
    <property type="entry name" value="SSD"/>
    <property type="match status" value="1"/>
</dbReference>
<keyword id="KW-0002">3D-structure</keyword>
<keyword id="KW-1015">Disulfide bond</keyword>
<keyword id="KW-0325">Glycoprotein</keyword>
<keyword id="KW-0443">Lipid metabolism</keyword>
<keyword id="KW-0445">Lipid transport</keyword>
<keyword id="KW-0472">Membrane</keyword>
<keyword id="KW-1185">Reference proteome</keyword>
<keyword id="KW-0732">Signal</keyword>
<keyword id="KW-0746">Sphingolipid metabolism</keyword>
<keyword id="KW-0812">Transmembrane</keyword>
<keyword id="KW-1133">Transmembrane helix</keyword>
<keyword id="KW-0813">Transport</keyword>
<keyword id="KW-0926">Vacuole</keyword>
<sequence>MNVLWIIALVGQLMRLVQGTATCAMYGNCGKKSVFGNELPCPVPRSFEPPVLSDETSKLLVEVCGEEWKEVRYACCTKDQVVALRDNLQKAQPLISSCPACLKNFNNLFCHFTCAADQGRFVNITKVEKSKEDKDIVAELDVFMNSSWASEFYDSCKNIKFSATNGYAMDLIGGGAKNYSQFLKFLGDAKPMLGGSPFQINYKYDLANEEKEWQEFNDEVYACDDAQYKCACSDCQESCPHLKPLKDGVCKVGPLPCFSLSVLIFYTICALFAFMWYYLCKRKKNGAMIVDDDIVPESGSLDESETNVFESFNNETNFFNGKLANLFTKVGQFSVENPYKILITTVFSIFVFSFIIFQYATLETDPINLWVSKNSEKFKEKEYFDDNFGPFYRTEQIFVVNETGPVLSYETLHWWFDVENFITEELQSSENIGYQDLCFRPTEDSTCVIESFTQYFQGALPNKDSWKRELQECGKFPVNCLPTFQQPLKTNLLFSDDDILNAHAFVVTLLLTNHTQSANRWEERLEEYLLDLKVPEGLRISFNTEISLEKELNNNNDISTVAISYLMMFLYATWALRRKDGKTRLLLGISGLLIVLASIVCAAGFLTLFGLKSTLIIAEVIPFLILAIGIDNIFLITHEYDRNCEQKPEYSIDQKIISAIGRMSPSILMSLLCQTGCFLIAAFVTMPAVHNFAIYSTVSVIFNGVLQLTAYVSILSLYEKRSNYKQITGNEETKESFLKTFYFKMLTQKRLIIIIFSAWFFTSLVFLPEIQFGLDQTLAVPQDSYLVDYFKDVYSFLNVGPPVYMVVKNLDLTKRQNQQKICGKFTTCERDSLANVLEQERHRSTITEPLANWLDDYFMFLNPQNDQCCRLKKGTDEVCPPSFPSRRCETCFQQGSWNYNMSGFPEGKDFMEYLSIWINAPSDPCPLGGRAPYSTALVYNETSVSASVFRTAHHPLRSQKDFIQAYSDGVRISSSFPELDMFAYSPFYIFFVQYQTLGPLTLKLIGSAIILIFFISSVFLQNIRSSFLLALVVTMIIVDIGALMALLGISLNAVSLVNLIICVGLGVEFCVHIVRSFTVVPSETKKDANSRVLYSLNTIGESVIKGITLTKFIGVCVLAFAQSKIFDVFYFRMWFTLIIVAALHALLFLPALLSLFGGESYRDDSIEAED</sequence>
<evidence type="ECO:0000250" key="1">
    <source>
        <dbReference type="UniProtKB" id="O15118"/>
    </source>
</evidence>
<evidence type="ECO:0000255" key="2"/>
<evidence type="ECO:0000255" key="3">
    <source>
        <dbReference type="PROSITE-ProRule" id="PRU00199"/>
    </source>
</evidence>
<evidence type="ECO:0000269" key="4">
    <source>
    </source>
</evidence>
<evidence type="ECO:0000269" key="5">
    <source>
    </source>
</evidence>
<evidence type="ECO:0000269" key="6">
    <source>
    </source>
</evidence>
<evidence type="ECO:0000269" key="7">
    <source>
    </source>
</evidence>
<evidence type="ECO:0000269" key="8">
    <source>
    </source>
</evidence>
<evidence type="ECO:0000305" key="9"/>
<evidence type="ECO:0000312" key="10">
    <source>
        <dbReference type="SGD" id="S000005927"/>
    </source>
</evidence>
<evidence type="ECO:0007829" key="11">
    <source>
        <dbReference type="PDB" id="6R4L"/>
    </source>
</evidence>
<evidence type="ECO:0007829" key="12">
    <source>
        <dbReference type="PDB" id="8QEB"/>
    </source>
</evidence>
<evidence type="ECO:0007829" key="13">
    <source>
        <dbReference type="PDB" id="8QEC"/>
    </source>
</evidence>
<evidence type="ECO:0007829" key="14">
    <source>
        <dbReference type="PDB" id="8QED"/>
    </source>
</evidence>
<evidence type="ECO:0007829" key="15">
    <source>
        <dbReference type="PDB" id="8QEE"/>
    </source>
</evidence>
<evidence type="ECO:0007829" key="16">
    <source>
        <dbReference type="PDB" id="9F40"/>
    </source>
</evidence>
<evidence type="ECO:0007829" key="17">
    <source>
        <dbReference type="PDB" id="9F41"/>
    </source>
</evidence>
<feature type="signal peptide" evidence="2">
    <location>
        <begin position="1"/>
        <end position="19"/>
    </location>
</feature>
<feature type="chain" id="PRO_0000268685" description="NPC intracellular sterol transporter 1-related protein 1">
    <location>
        <begin position="20"/>
        <end position="1170"/>
    </location>
</feature>
<feature type="transmembrane region" description="Helical" evidence="2">
    <location>
        <begin position="260"/>
        <end position="280"/>
    </location>
</feature>
<feature type="transmembrane region" description="Helical" evidence="2">
    <location>
        <begin position="341"/>
        <end position="361"/>
    </location>
</feature>
<feature type="transmembrane region" description="Helical" evidence="2">
    <location>
        <begin position="556"/>
        <end position="576"/>
    </location>
</feature>
<feature type="transmembrane region" description="Helical" evidence="2">
    <location>
        <begin position="585"/>
        <end position="605"/>
    </location>
</feature>
<feature type="transmembrane region" description="Helical" evidence="2">
    <location>
        <begin position="616"/>
        <end position="636"/>
    </location>
</feature>
<feature type="transmembrane region" description="Helical" evidence="2">
    <location>
        <begin position="667"/>
        <end position="687"/>
    </location>
</feature>
<feature type="transmembrane region" description="Helical" evidence="2">
    <location>
        <begin position="698"/>
        <end position="718"/>
    </location>
</feature>
<feature type="transmembrane region" description="Helical" evidence="2">
    <location>
        <begin position="752"/>
        <end position="772"/>
    </location>
</feature>
<feature type="transmembrane region" description="Helical" evidence="2">
    <location>
        <begin position="1000"/>
        <end position="1020"/>
    </location>
</feature>
<feature type="transmembrane region" description="Helical" evidence="2">
    <location>
        <begin position="1027"/>
        <end position="1047"/>
    </location>
</feature>
<feature type="transmembrane region" description="Helical" evidence="2">
    <location>
        <begin position="1054"/>
        <end position="1074"/>
    </location>
</feature>
<feature type="transmembrane region" description="Helical" evidence="2">
    <location>
        <begin position="1099"/>
        <end position="1119"/>
    </location>
</feature>
<feature type="transmembrane region" description="Helical" evidence="2">
    <location>
        <begin position="1133"/>
        <end position="1153"/>
    </location>
</feature>
<feature type="domain" description="SSD" evidence="3">
    <location>
        <begin position="557"/>
        <end position="717"/>
    </location>
</feature>
<feature type="glycosylation site" description="N-linked (GlcNAc...) asparagine" evidence="2">
    <location>
        <position position="123"/>
    </location>
</feature>
<feature type="glycosylation site" description="N-linked (GlcNAc...) asparagine" evidence="2">
    <location>
        <position position="145"/>
    </location>
</feature>
<feature type="glycosylation site" description="N-linked (GlcNAc...) asparagine" evidence="2">
    <location>
        <position position="178"/>
    </location>
</feature>
<feature type="glycosylation site" description="N-linked (GlcNAc...) asparagine" evidence="2">
    <location>
        <position position="314"/>
    </location>
</feature>
<feature type="glycosylation site" description="N-linked (GlcNAc...) asparagine" evidence="2">
    <location>
        <position position="401"/>
    </location>
</feature>
<feature type="glycosylation site" description="N-linked (GlcNAc...) asparagine" evidence="2">
    <location>
        <position position="513"/>
    </location>
</feature>
<feature type="glycosylation site" description="N-linked (GlcNAc...) asparagine" evidence="2">
    <location>
        <position position="900"/>
    </location>
</feature>
<feature type="glycosylation site" description="N-linked (GlcNAc...) asparagine" evidence="2">
    <location>
        <position position="940"/>
    </location>
</feature>
<feature type="disulfide bond" evidence="1">
    <location>
        <begin position="23"/>
        <end position="75"/>
    </location>
</feature>
<feature type="disulfide bond" evidence="1">
    <location>
        <begin position="29"/>
        <end position="41"/>
    </location>
</feature>
<feature type="disulfide bond" evidence="1">
    <location>
        <begin position="64"/>
        <end position="110"/>
    </location>
</feature>
<feature type="disulfide bond" evidence="1">
    <location>
        <begin position="76"/>
        <end position="114"/>
    </location>
</feature>
<feature type="disulfide bond" evidence="1">
    <location>
        <begin position="98"/>
        <end position="230"/>
    </location>
</feature>
<feature type="disulfide bond" evidence="1">
    <location>
        <begin position="101"/>
        <end position="156"/>
    </location>
</feature>
<feature type="disulfide bond" evidence="1">
    <location>
        <begin position="223"/>
        <end position="235"/>
    </location>
</feature>
<feature type="disulfide bond" evidence="1">
    <location>
        <begin position="232"/>
        <end position="239"/>
    </location>
</feature>
<feature type="disulfide bond" evidence="1">
    <location>
        <begin position="438"/>
        <end position="447"/>
    </location>
</feature>
<feature type="disulfide bond" evidence="1">
    <location>
        <begin position="473"/>
        <end position="480"/>
    </location>
</feature>
<feature type="disulfide bond" evidence="1">
    <location>
        <begin position="822"/>
        <end position="828"/>
    </location>
</feature>
<feature type="disulfide bond" evidence="1">
    <location>
        <begin position="868"/>
        <end position="925"/>
    </location>
</feature>
<feature type="disulfide bond" evidence="1">
    <location>
        <begin position="869"/>
        <end position="891"/>
    </location>
</feature>
<feature type="disulfide bond" evidence="1">
    <location>
        <begin position="879"/>
        <end position="888"/>
    </location>
</feature>
<feature type="mutagenesis site" description="Sphingolipids mislocalization and no growth at 38 degrees Celsius." evidence="6">
    <original>Y</original>
    <variation>D</variation>
    <location>
        <position position="718"/>
    </location>
</feature>
<feature type="strand" evidence="16">
    <location>
        <begin position="24"/>
        <end position="33"/>
    </location>
</feature>
<feature type="strand" evidence="16">
    <location>
        <begin position="38"/>
        <end position="42"/>
    </location>
</feature>
<feature type="strand" evidence="12">
    <location>
        <begin position="45"/>
        <end position="47"/>
    </location>
</feature>
<feature type="helix" evidence="16">
    <location>
        <begin position="54"/>
        <end position="64"/>
    </location>
</feature>
<feature type="helix" evidence="16">
    <location>
        <begin position="66"/>
        <end position="68"/>
    </location>
</feature>
<feature type="helix" evidence="16">
    <location>
        <begin position="78"/>
        <end position="95"/>
    </location>
</feature>
<feature type="helix" evidence="16">
    <location>
        <begin position="99"/>
        <end position="114"/>
    </location>
</feature>
<feature type="helix" evidence="16">
    <location>
        <begin position="118"/>
        <end position="120"/>
    </location>
</feature>
<feature type="strand" evidence="16">
    <location>
        <begin position="122"/>
        <end position="129"/>
    </location>
</feature>
<feature type="strand" evidence="16">
    <location>
        <begin position="135"/>
        <end position="144"/>
    </location>
</feature>
<feature type="helix" evidence="16">
    <location>
        <begin position="146"/>
        <end position="154"/>
    </location>
</feature>
<feature type="turn" evidence="16">
    <location>
        <begin position="155"/>
        <end position="158"/>
    </location>
</feature>
<feature type="turn" evidence="17">
    <location>
        <begin position="162"/>
        <end position="165"/>
    </location>
</feature>
<feature type="helix" evidence="16">
    <location>
        <begin position="169"/>
        <end position="172"/>
    </location>
</feature>
<feature type="strand" evidence="16">
    <location>
        <begin position="173"/>
        <end position="175"/>
    </location>
</feature>
<feature type="helix" evidence="16">
    <location>
        <begin position="179"/>
        <end position="187"/>
    </location>
</feature>
<feature type="turn" evidence="16">
    <location>
        <begin position="191"/>
        <end position="194"/>
    </location>
</feature>
<feature type="strand" evidence="16">
    <location>
        <begin position="195"/>
        <end position="203"/>
    </location>
</feature>
<feature type="helix" evidence="12">
    <location>
        <begin position="208"/>
        <end position="210"/>
    </location>
</feature>
<feature type="strand" evidence="11">
    <location>
        <begin position="223"/>
        <end position="227"/>
    </location>
</feature>
<feature type="turn" evidence="16">
    <location>
        <begin position="232"/>
        <end position="234"/>
    </location>
</feature>
<feature type="turn" evidence="12">
    <location>
        <begin position="236"/>
        <end position="238"/>
    </location>
</feature>
<feature type="strand" evidence="13">
    <location>
        <begin position="248"/>
        <end position="250"/>
    </location>
</feature>
<feature type="helix" evidence="14">
    <location>
        <begin position="257"/>
        <end position="278"/>
    </location>
</feature>
<feature type="strand" evidence="12">
    <location>
        <begin position="311"/>
        <end position="313"/>
    </location>
</feature>
<feature type="turn" evidence="12">
    <location>
        <begin position="314"/>
        <end position="318"/>
    </location>
</feature>
<feature type="turn" evidence="11">
    <location>
        <begin position="319"/>
        <end position="323"/>
    </location>
</feature>
<feature type="helix" evidence="15">
    <location>
        <begin position="325"/>
        <end position="336"/>
    </location>
</feature>
<feature type="helix" evidence="15">
    <location>
        <begin position="338"/>
        <end position="359"/>
    </location>
</feature>
<feature type="helix" evidence="15">
    <location>
        <begin position="366"/>
        <end position="370"/>
    </location>
</feature>
<feature type="helix" evidence="15">
    <location>
        <begin position="376"/>
        <end position="388"/>
    </location>
</feature>
<feature type="strand" evidence="15">
    <location>
        <begin position="393"/>
        <end position="400"/>
    </location>
</feature>
<feature type="strand" evidence="14">
    <location>
        <begin position="402"/>
        <end position="404"/>
    </location>
</feature>
<feature type="helix" evidence="15">
    <location>
        <begin position="409"/>
        <end position="424"/>
    </location>
</feature>
<feature type="turn" evidence="13">
    <location>
        <begin position="429"/>
        <end position="431"/>
    </location>
</feature>
<feature type="turn" evidence="15">
    <location>
        <begin position="435"/>
        <end position="437"/>
    </location>
</feature>
<feature type="strand" evidence="14">
    <location>
        <begin position="441"/>
        <end position="444"/>
    </location>
</feature>
<feature type="strand" evidence="15">
    <location>
        <begin position="449"/>
        <end position="451"/>
    </location>
</feature>
<feature type="helix" evidence="15">
    <location>
        <begin position="452"/>
        <end position="456"/>
    </location>
</feature>
<feature type="turn" evidence="15">
    <location>
        <begin position="463"/>
        <end position="465"/>
    </location>
</feature>
<feature type="helix" evidence="15">
    <location>
        <begin position="466"/>
        <end position="475"/>
    </location>
</feature>
<feature type="helix" evidence="15">
    <location>
        <begin position="477"/>
        <end position="480"/>
    </location>
</feature>
<feature type="strand" evidence="11">
    <location>
        <begin position="483"/>
        <end position="485"/>
    </location>
</feature>
<feature type="helix" evidence="15">
    <location>
        <begin position="490"/>
        <end position="493"/>
    </location>
</feature>
<feature type="strand" evidence="15">
    <location>
        <begin position="494"/>
        <end position="498"/>
    </location>
</feature>
<feature type="helix" evidence="15">
    <location>
        <begin position="499"/>
        <end position="501"/>
    </location>
</feature>
<feature type="strand" evidence="15">
    <location>
        <begin position="503"/>
        <end position="511"/>
    </location>
</feature>
<feature type="helix" evidence="15">
    <location>
        <begin position="516"/>
        <end position="530"/>
    </location>
</feature>
<feature type="strand" evidence="15">
    <location>
        <begin position="539"/>
        <end position="543"/>
    </location>
</feature>
<feature type="helix" evidence="15">
    <location>
        <begin position="547"/>
        <end position="552"/>
    </location>
</feature>
<feature type="helix" evidence="15">
    <location>
        <begin position="558"/>
        <end position="575"/>
    </location>
</feature>
<feature type="strand" evidence="12">
    <location>
        <begin position="579"/>
        <end position="581"/>
    </location>
</feature>
<feature type="helix" evidence="15">
    <location>
        <begin position="585"/>
        <end position="608"/>
    </location>
</feature>
<feature type="helix" evidence="15">
    <location>
        <begin position="615"/>
        <end position="619"/>
    </location>
</feature>
<feature type="helix" evidence="15">
    <location>
        <begin position="621"/>
        <end position="629"/>
    </location>
</feature>
<feature type="helix" evidence="15">
    <location>
        <begin position="631"/>
        <end position="645"/>
    </location>
</feature>
<feature type="helix" evidence="15">
    <location>
        <begin position="652"/>
        <end position="681"/>
    </location>
</feature>
<feature type="helix" evidence="15">
    <location>
        <begin position="687"/>
        <end position="721"/>
    </location>
</feature>
<feature type="helix" evidence="15">
    <location>
        <begin position="738"/>
        <end position="744"/>
    </location>
</feature>
<feature type="helix" evidence="15">
    <location>
        <begin position="745"/>
        <end position="748"/>
    </location>
</feature>
<feature type="helix" evidence="15">
    <location>
        <begin position="749"/>
        <end position="766"/>
    </location>
</feature>
<feature type="helix" evidence="15">
    <location>
        <begin position="767"/>
        <end position="769"/>
    </location>
</feature>
<feature type="helix" evidence="15">
    <location>
        <begin position="776"/>
        <end position="779"/>
    </location>
</feature>
<feature type="strand" evidence="14">
    <location>
        <begin position="782"/>
        <end position="784"/>
    </location>
</feature>
<feature type="helix" evidence="15">
    <location>
        <begin position="785"/>
        <end position="796"/>
    </location>
</feature>
<feature type="strand" evidence="15">
    <location>
        <begin position="802"/>
        <end position="809"/>
    </location>
</feature>
<feature type="helix" evidence="15">
    <location>
        <begin position="815"/>
        <end position="819"/>
    </location>
</feature>
<feature type="strand" evidence="12">
    <location>
        <begin position="826"/>
        <end position="828"/>
    </location>
</feature>
<feature type="helix" evidence="15">
    <location>
        <begin position="833"/>
        <end position="840"/>
    </location>
</feature>
<feature type="turn" evidence="15">
    <location>
        <begin position="841"/>
        <end position="843"/>
    </location>
</feature>
<feature type="strand" evidence="14">
    <location>
        <begin position="844"/>
        <end position="846"/>
    </location>
</feature>
<feature type="helix" evidence="15">
    <location>
        <begin position="853"/>
        <end position="860"/>
    </location>
</feature>
<feature type="helix" evidence="11">
    <location>
        <begin position="863"/>
        <end position="865"/>
    </location>
</feature>
<feature type="strand" evidence="15">
    <location>
        <begin position="868"/>
        <end position="872"/>
    </location>
</feature>
<feature type="strand" evidence="15">
    <location>
        <begin position="875"/>
        <end position="878"/>
    </location>
</feature>
<feature type="strand" evidence="15">
    <location>
        <begin position="887"/>
        <end position="892"/>
    </location>
</feature>
<feature type="turn" evidence="15">
    <location>
        <begin position="894"/>
        <end position="896"/>
    </location>
</feature>
<feature type="turn" evidence="14">
    <location>
        <begin position="899"/>
        <end position="901"/>
    </location>
</feature>
<feature type="helix" evidence="15">
    <location>
        <begin position="908"/>
        <end position="917"/>
    </location>
</feature>
<feature type="turn" evidence="15">
    <location>
        <begin position="922"/>
        <end position="924"/>
    </location>
</feature>
<feature type="helix" evidence="15">
    <location>
        <begin position="930"/>
        <end position="933"/>
    </location>
</feature>
<feature type="strand" evidence="15">
    <location>
        <begin position="934"/>
        <end position="939"/>
    </location>
</feature>
<feature type="strand" evidence="11">
    <location>
        <begin position="941"/>
        <end position="943"/>
    </location>
</feature>
<feature type="strand" evidence="15">
    <location>
        <begin position="944"/>
        <end position="952"/>
    </location>
</feature>
<feature type="helix" evidence="15">
    <location>
        <begin position="959"/>
        <end position="973"/>
    </location>
</feature>
<feature type="strand" evidence="15">
    <location>
        <begin position="979"/>
        <end position="984"/>
    </location>
</feature>
<feature type="helix" evidence="15">
    <location>
        <begin position="988"/>
        <end position="991"/>
    </location>
</feature>
<feature type="helix" evidence="15">
    <location>
        <begin position="993"/>
        <end position="995"/>
    </location>
</feature>
<feature type="helix" evidence="15">
    <location>
        <begin position="997"/>
        <end position="1020"/>
    </location>
</feature>
<feature type="helix" evidence="15">
    <location>
        <begin position="1023"/>
        <end position="1047"/>
    </location>
</feature>
<feature type="helix" evidence="15">
    <location>
        <begin position="1053"/>
        <end position="1078"/>
    </location>
</feature>
<feature type="strand" evidence="13">
    <location>
        <begin position="1082"/>
        <end position="1084"/>
    </location>
</feature>
<feature type="helix" evidence="15">
    <location>
        <begin position="1088"/>
        <end position="1096"/>
    </location>
</feature>
<feature type="helix" evidence="15">
    <location>
        <begin position="1100"/>
        <end position="1106"/>
    </location>
</feature>
<feature type="helix" evidence="15">
    <location>
        <begin position="1108"/>
        <end position="1116"/>
    </location>
</feature>
<feature type="helix" evidence="15">
    <location>
        <begin position="1117"/>
        <end position="1120"/>
    </location>
</feature>
<feature type="helix" evidence="15">
    <location>
        <begin position="1125"/>
        <end position="1128"/>
    </location>
</feature>
<feature type="helix" evidence="15">
    <location>
        <begin position="1131"/>
        <end position="1146"/>
    </location>
</feature>
<feature type="helix" evidence="15">
    <location>
        <begin position="1148"/>
        <end position="1154"/>
    </location>
</feature>